<organism>
    <name type="scientific">Methylosinus trichosporium</name>
    <dbReference type="NCBI Taxonomy" id="426"/>
    <lineage>
        <taxon>Bacteria</taxon>
        <taxon>Pseudomonadati</taxon>
        <taxon>Pseudomonadota</taxon>
        <taxon>Alphaproteobacteria</taxon>
        <taxon>Hyphomicrobiales</taxon>
        <taxon>Methylocystaceae</taxon>
        <taxon>Methylosinus</taxon>
    </lineage>
</organism>
<gene>
    <name type="primary">mmoD</name>
</gene>
<sequence length="102" mass="11926">MDQQTAHEVRQTLIHADERYQAYTMDLEYMLRWEILRDGEFVQEGCSLSQESAREAVAHVLSHFRRQMLRRRTTAGKAKLRALLAIGTPSPEGRERRGERDI</sequence>
<feature type="chain" id="PRO_0000096510" description="Methane monooxygenase component D">
    <location>
        <begin position="1"/>
        <end position="102"/>
    </location>
</feature>
<comment type="subunit">
    <text>The soluble methane monooxygenase (sMMO) consists of four components A/MMOH (composed of alpha/MmoX, beta/MmoY and gamma/MmoZ), B/MMOB (MmoB), C/MMOR (MmoC) and D/MMOD (MmoD).</text>
</comment>
<keyword id="KW-0503">Monooxygenase</keyword>
<keyword id="KW-0560">Oxidoreductase</keyword>
<proteinExistence type="predicted"/>
<accession>Q53562</accession>
<dbReference type="EMBL" id="S81887">
    <property type="protein sequence ID" value="AAB21392.1"/>
    <property type="molecule type" value="Genomic_DNA"/>
</dbReference>
<dbReference type="PIR" id="B48360">
    <property type="entry name" value="B48360"/>
</dbReference>
<dbReference type="SMR" id="Q53562"/>
<dbReference type="BioCyc" id="MetaCyc:MONOMER-3872"/>
<dbReference type="BRENDA" id="1.14.13.25">
    <property type="organism ID" value="3322"/>
</dbReference>
<dbReference type="GO" id="GO:0004497">
    <property type="term" value="F:monooxygenase activity"/>
    <property type="evidence" value="ECO:0007669"/>
    <property type="project" value="UniProtKB-KW"/>
</dbReference>
<dbReference type="InterPro" id="IPR017256">
    <property type="entry name" value="MmoD"/>
</dbReference>
<dbReference type="NCBIfam" id="TIGR04550">
    <property type="entry name" value="sMetMonox_MmoD"/>
    <property type="match status" value="1"/>
</dbReference>
<dbReference type="PIRSF" id="PIRSF037664">
    <property type="entry name" value="Methane_mOase_D"/>
    <property type="match status" value="1"/>
</dbReference>
<name>MMOD_METTR</name>
<protein>
    <recommendedName>
        <fullName>Methane monooxygenase component D</fullName>
    </recommendedName>
</protein>
<reference key="1">
    <citation type="journal article" date="1991" name="Arch. Microbiol.">
        <title>The methane monooxygenase gene cluster of Methylosinus trichosporium: cloning and sequencing of the mmoC gene.</title>
        <authorList>
            <person name="Cardy D.L.N."/>
            <person name="Laidler V."/>
            <person name="Salmond G.P.C."/>
            <person name="Murrell J.C."/>
        </authorList>
    </citation>
    <scope>NUCLEOTIDE SEQUENCE [GENOMIC DNA]</scope>
    <source>
        <strain>ATCC 35070 / NCIMB 11131 / ACM 3311 / OB3b</strain>
    </source>
</reference>